<protein>
    <recommendedName>
        <fullName>Master replication protein</fullName>
        <shortName>M-Rep</shortName>
        <ecNumber>2.7.7.-</ecNumber>
        <ecNumber>3.1.21.-</ecNumber>
        <ecNumber>3.6.1.-</ecNumber>
    </recommendedName>
</protein>
<comment type="function">
    <text evidence="1">Essential for the replication of all genomic viral ssDNA (trans-replication). The closed circular ssDNA genome is first converted to a superhelical dsDNA. Rep binds a specific hairpin at the genome origin of replication. Introduces an endonucleolytic nick within the conserved sequence 5'-A[GT]TATTAC-3' in the intergenic region of the genome, thereby initiating the rolling circle replication (RCR). Following cleavage, binds covalently to the 5'-phosphate of DNA as a tyrosyl ester. The cleavage gives rise to a free 3'-OH that serves as a primer for the cellular DNA polymerase. The polymerase synthesizes the (+) strand DNA by rolling circle mechanism. After one round of replication, a Rep-catalyzed nucleotidyl transfer reaction releases a circular single-stranded virus genome, thereby terminating the replication. Displays origin-specific DNA cleavage, nucleotidyl transferase, ATPase and helicase activities (By similarity).</text>
</comment>
<comment type="catalytic activity">
    <reaction>
        <text>ATP + H2O = ADP + phosphate + H(+)</text>
        <dbReference type="Rhea" id="RHEA:13065"/>
        <dbReference type="ChEBI" id="CHEBI:15377"/>
        <dbReference type="ChEBI" id="CHEBI:15378"/>
        <dbReference type="ChEBI" id="CHEBI:30616"/>
        <dbReference type="ChEBI" id="CHEBI:43474"/>
        <dbReference type="ChEBI" id="CHEBI:456216"/>
    </reaction>
</comment>
<comment type="cofactor">
    <cofactor evidence="1">
        <name>Mg(2+)</name>
        <dbReference type="ChEBI" id="CHEBI:18420"/>
    </cofactor>
    <cofactor evidence="1">
        <name>Mn(2+)</name>
        <dbReference type="ChEBI" id="CHEBI:29035"/>
    </cofactor>
    <text evidence="1">Divalent metal cations, possibly Mg(2+) or Mn(2+).</text>
</comment>
<comment type="subunit">
    <text evidence="1 4">Homooligomer (Potential). Rep binds to repeated DNA motifs (iterons) (By similarity).</text>
</comment>
<comment type="subcellular location">
    <subcellularLocation>
        <location evidence="4">Host nucleus</location>
    </subcellularLocation>
</comment>
<comment type="domain">
    <text evidence="1">There are 3 rolling circle replication (RCR) motifs. RCR-2 is probably involved in metal coordination. RCR-3 is required for phosphodiester bond cleavage for initiation of RCR (By similarity).</text>
</comment>
<comment type="miscellaneous">
    <text>The genome of nanoviruses is composed of six to eight segments. In addition, some isolates contain subviral DNAs.</text>
</comment>
<comment type="similarity">
    <text evidence="4">Belongs to the nanoviridea/circoviridae replication-associated protein family.</text>
</comment>
<organismHost>
    <name type="scientific">Astragalus sinicus</name>
    <name type="common">Chinese milk vetch</name>
    <dbReference type="NCBI Taxonomy" id="47065"/>
</organismHost>
<organismHost>
    <name type="scientific">Glycine max</name>
    <name type="common">Soybean</name>
    <name type="synonym">Glycine hispida</name>
    <dbReference type="NCBI Taxonomy" id="3847"/>
</organismHost>
<organismHost>
    <name type="scientific">Phaseolus vulgaris</name>
    <name type="common">Kidney bean</name>
    <name type="synonym">French bean</name>
    <dbReference type="NCBI Taxonomy" id="3885"/>
</organismHost>
<organismHost>
    <name type="scientific">Pisum sativum</name>
    <name type="common">Garden pea</name>
    <name type="synonym">Lathyrus oleraceus</name>
    <dbReference type="NCBI Taxonomy" id="3888"/>
</organismHost>
<organismHost>
    <name type="scientific">Vicia faba</name>
    <name type="common">Broad bean</name>
    <name type="synonym">Faba vulgaris</name>
    <dbReference type="NCBI Taxonomy" id="3906"/>
</organismHost>
<reference key="1">
    <citation type="journal article" date="1998" name="J. Gen. Virol.">
        <title>Sequences of ten circular ssDNA components associated with the milk vetch dwarf virus genome.</title>
        <authorList>
            <person name="Sano Y."/>
            <person name="Wada M."/>
            <person name="Hashimoto Y."/>
            <person name="Matsumoto T."/>
            <person name="Kojima M."/>
        </authorList>
    </citation>
    <scope>NUCLEOTIDE SEQUENCE [GENOMIC DNA]</scope>
</reference>
<sequence length="286" mass="33334">MARQVICWCFTLNNPLSPLSLHELMKYLVYQREQGEAGNIHFQGYIEMKKRTSLAGMKKLIPGAHFEKRRGTQGEARAYAMKEDTRLEGPWEYGEFIPTIEDKLREVMNDMKITGKRPIEYIEECCNTYDKSASTLREFRGELKKKKAIISWELQRKPWMDEVDTLLQERDGRRIIWVYGPQGGEGKTSYAKHLVKTRDAFYSTGGKTADIAFAWDHQELVLFDFPRSFEEYVNYGVIEQLKNGIIQSGKYQSVIKYSDYVEVIVFANFTPRSGMFSDDRIVYVYA</sequence>
<organism>
    <name type="scientific">Milk vetch dwarf virus (isolate N)</name>
    <name type="common">MDV</name>
    <dbReference type="NCBI Taxonomy" id="291605"/>
    <lineage>
        <taxon>Viruses</taxon>
        <taxon>Monodnaviria</taxon>
        <taxon>Shotokuvirae</taxon>
        <taxon>Cressdnaviricota</taxon>
        <taxon>Arfiviricetes</taxon>
        <taxon>Mulpavirales</taxon>
        <taxon>Nanoviridae</taxon>
        <taxon>Nanovirus</taxon>
        <taxon>Milk vetch dwarf virus</taxon>
    </lineage>
</organism>
<name>MREP_MDV1</name>
<evidence type="ECO:0000250" key="1"/>
<evidence type="ECO:0000255" key="2"/>
<evidence type="ECO:0000255" key="3">
    <source>
        <dbReference type="PROSITE-ProRule" id="PRU01364"/>
    </source>
</evidence>
<evidence type="ECO:0000305" key="4"/>
<gene>
    <name type="primary">DNA-R</name>
    <name type="synonym">C11</name>
</gene>
<accession>Q9IR51</accession>
<keyword id="KW-0067">ATP-binding</keyword>
<keyword id="KW-0190">Covalent protein-DNA linkage</keyword>
<keyword id="KW-0235">DNA replication</keyword>
<keyword id="KW-0238">DNA-binding</keyword>
<keyword id="KW-0255">Endonuclease</keyword>
<keyword id="KW-0347">Helicase</keyword>
<keyword id="KW-1048">Host nucleus</keyword>
<keyword id="KW-0378">Hydrolase</keyword>
<keyword id="KW-0479">Metal-binding</keyword>
<keyword id="KW-0511">Multifunctional enzyme</keyword>
<keyword id="KW-0540">Nuclease</keyword>
<keyword id="KW-0547">Nucleotide-binding</keyword>
<keyword id="KW-0548">Nucleotidyltransferase</keyword>
<keyword id="KW-1185">Reference proteome</keyword>
<keyword id="KW-0808">Transferase</keyword>
<feature type="chain" id="PRO_0000378520" description="Master replication protein">
    <location>
        <begin position="1"/>
        <end position="286"/>
    </location>
</feature>
<feature type="domain" description="CRESS-DNA virus Rep endonuclease" evidence="3">
    <location>
        <begin position="2"/>
        <end position="96"/>
    </location>
</feature>
<feature type="short sequence motif" description="RCR-1" evidence="3">
    <location>
        <begin position="9"/>
        <end position="12"/>
    </location>
</feature>
<feature type="short sequence motif" description="RCR-2" evidence="3">
    <location>
        <begin position="41"/>
        <end position="43"/>
    </location>
</feature>
<feature type="short sequence motif" description="Nuclear localization signal" evidence="2">
    <location>
        <begin position="50"/>
        <end position="70"/>
    </location>
</feature>
<feature type="short sequence motif" description="RCR-3" evidence="3">
    <location>
        <begin position="79"/>
        <end position="82"/>
    </location>
</feature>
<feature type="short sequence motif" description="Nuclear localization signal" evidence="2">
    <location>
        <begin position="96"/>
        <end position="102"/>
    </location>
</feature>
<feature type="active site" description="For DNA cleavage activity" evidence="3">
    <location>
        <position position="79"/>
    </location>
</feature>
<feature type="binding site" evidence="2">
    <location>
        <position position="33"/>
    </location>
    <ligand>
        <name>a divalent metal cation</name>
        <dbReference type="ChEBI" id="CHEBI:60240"/>
    </ligand>
</feature>
<feature type="binding site" evidence="2">
    <location>
        <position position="41"/>
    </location>
    <ligand>
        <name>a divalent metal cation</name>
        <dbReference type="ChEBI" id="CHEBI:60240"/>
    </ligand>
</feature>
<feature type="binding site" evidence="2">
    <location>
        <position position="84"/>
    </location>
    <ligand>
        <name>a divalent metal cation</name>
        <dbReference type="ChEBI" id="CHEBI:60240"/>
    </ligand>
</feature>
<feature type="binding site" evidence="1">
    <location>
        <begin position="180"/>
        <end position="188"/>
    </location>
    <ligand>
        <name>ATP</name>
        <dbReference type="ChEBI" id="CHEBI:30616"/>
    </ligand>
</feature>
<dbReference type="EC" id="2.7.7.-"/>
<dbReference type="EC" id="3.1.21.-"/>
<dbReference type="EC" id="3.6.1.-"/>
<dbReference type="EMBL" id="AB027511">
    <property type="protein sequence ID" value="BAA97561.1"/>
    <property type="molecule type" value="Genomic_DNA"/>
</dbReference>
<dbReference type="SMR" id="Q9IR51"/>
<dbReference type="KEGG" id="vg:995288"/>
<dbReference type="Proteomes" id="UP001507899">
    <property type="component" value="Genome"/>
</dbReference>
<dbReference type="GO" id="GO:0042025">
    <property type="term" value="C:host cell nucleus"/>
    <property type="evidence" value="ECO:0007669"/>
    <property type="project" value="UniProtKB-SubCell"/>
</dbReference>
<dbReference type="GO" id="GO:0005524">
    <property type="term" value="F:ATP binding"/>
    <property type="evidence" value="ECO:0007669"/>
    <property type="project" value="UniProtKB-KW"/>
</dbReference>
<dbReference type="GO" id="GO:0016887">
    <property type="term" value="F:ATP hydrolysis activity"/>
    <property type="evidence" value="ECO:0007669"/>
    <property type="project" value="RHEA"/>
</dbReference>
<dbReference type="GO" id="GO:0003677">
    <property type="term" value="F:DNA binding"/>
    <property type="evidence" value="ECO:0007669"/>
    <property type="project" value="UniProtKB-KW"/>
</dbReference>
<dbReference type="GO" id="GO:0004519">
    <property type="term" value="F:endonuclease activity"/>
    <property type="evidence" value="ECO:0007669"/>
    <property type="project" value="UniProtKB-KW"/>
</dbReference>
<dbReference type="GO" id="GO:0046872">
    <property type="term" value="F:metal ion binding"/>
    <property type="evidence" value="ECO:0007669"/>
    <property type="project" value="UniProtKB-KW"/>
</dbReference>
<dbReference type="GO" id="GO:0016779">
    <property type="term" value="F:nucleotidyltransferase activity"/>
    <property type="evidence" value="ECO:0007669"/>
    <property type="project" value="UniProtKB-KW"/>
</dbReference>
<dbReference type="GO" id="GO:0003723">
    <property type="term" value="F:RNA binding"/>
    <property type="evidence" value="ECO:0007669"/>
    <property type="project" value="InterPro"/>
</dbReference>
<dbReference type="GO" id="GO:0003724">
    <property type="term" value="F:RNA helicase activity"/>
    <property type="evidence" value="ECO:0007669"/>
    <property type="project" value="InterPro"/>
</dbReference>
<dbReference type="GO" id="GO:0006260">
    <property type="term" value="P:DNA replication"/>
    <property type="evidence" value="ECO:0007669"/>
    <property type="project" value="UniProtKB-KW"/>
</dbReference>
<dbReference type="FunFam" id="3.40.1310.20:FF:000002">
    <property type="entry name" value="Master replication protein"/>
    <property type="match status" value="1"/>
</dbReference>
<dbReference type="Gene3D" id="3.40.1310.20">
    <property type="match status" value="1"/>
</dbReference>
<dbReference type="InterPro" id="IPR049912">
    <property type="entry name" value="CRESS_DNA_REP"/>
</dbReference>
<dbReference type="InterPro" id="IPR000605">
    <property type="entry name" value="Helicase_SF3_ssDNA/RNA_vir"/>
</dbReference>
<dbReference type="Pfam" id="PF00910">
    <property type="entry name" value="RNA_helicase"/>
    <property type="match status" value="1"/>
</dbReference>
<dbReference type="Pfam" id="PF02407">
    <property type="entry name" value="Viral_Rep"/>
    <property type="match status" value="1"/>
</dbReference>
<dbReference type="PROSITE" id="PS52020">
    <property type="entry name" value="CRESS_DNA_REP"/>
    <property type="match status" value="1"/>
</dbReference>
<proteinExistence type="inferred from homology"/>